<feature type="signal peptide" evidence="2">
    <location>
        <begin position="1"/>
        <end position="23"/>
    </location>
</feature>
<feature type="peptide" id="PRO_0000434220" description="SIFamide-related peptide" evidence="3">
    <location>
        <begin position="24"/>
        <end position="35"/>
    </location>
</feature>
<feature type="propeptide" id="PRO_0000434221" evidence="6">
    <location>
        <begin position="39"/>
        <end position="73"/>
    </location>
</feature>
<feature type="modified residue" description="Phenylalanine amide" evidence="3">
    <location>
        <position position="35"/>
    </location>
</feature>
<sequence>MVSIRLTFALAIVAIIFAFSVDAAYKKPPFNGSIFGKRSNTMTDYEFTSRALSAICEVASETCTAWMSRQESN</sequence>
<keyword id="KW-0027">Amidation</keyword>
<keyword id="KW-0903">Direct protein sequencing</keyword>
<keyword id="KW-0527">Neuropeptide</keyword>
<keyword id="KW-1185">Reference proteome</keyword>
<keyword id="KW-0964">Secreted</keyword>
<keyword id="KW-0732">Signal</keyword>
<dbReference type="EMBL" id="GL442298">
    <property type="protein sequence ID" value="EFN63630.1"/>
    <property type="status" value="ALT_SEQ"/>
    <property type="molecule type" value="Genomic_DNA"/>
</dbReference>
<dbReference type="STRING" id="104421.E2ASG4"/>
<dbReference type="Proteomes" id="UP000000311">
    <property type="component" value="Unassembled WGS sequence"/>
</dbReference>
<dbReference type="GO" id="GO:0005576">
    <property type="term" value="C:extracellular region"/>
    <property type="evidence" value="ECO:0007669"/>
    <property type="project" value="UniProtKB-SubCell"/>
</dbReference>
<dbReference type="GO" id="GO:0007218">
    <property type="term" value="P:neuropeptide signaling pathway"/>
    <property type="evidence" value="ECO:0007669"/>
    <property type="project" value="UniProtKB-KW"/>
</dbReference>
<proteinExistence type="evidence at protein level"/>
<reference key="1">
    <citation type="journal article" date="2010" name="Science">
        <title>Genomic comparison of the ants Camponotus floridanus and Harpegnathos saltator.</title>
        <authorList>
            <person name="Bonasio R."/>
            <person name="Zhang G."/>
            <person name="Ye C."/>
            <person name="Mutti N.S."/>
            <person name="Fang X."/>
            <person name="Qin N."/>
            <person name="Donahue G."/>
            <person name="Yang P."/>
            <person name="Li Q."/>
            <person name="Li C."/>
            <person name="Zhang P."/>
            <person name="Huang Z."/>
            <person name="Berger S.L."/>
            <person name="Reinberg D."/>
            <person name="Wang J."/>
            <person name="Liebig J."/>
        </authorList>
    </citation>
    <scope>NUCLEOTIDE SEQUENCE [LARGE SCALE GENOMIC DNA]</scope>
</reference>
<reference evidence="5" key="2">
    <citation type="journal article" date="2015" name="J. Proteome Res.">
        <title>Neuropeptidomics of the carpenter ant Camponotus floridanus.</title>
        <authorList>
            <person name="Schmitt F."/>
            <person name="Vanselow J.T."/>
            <person name="Schlosser A."/>
            <person name="Kahnt J."/>
            <person name="Roessler W."/>
            <person name="Wegener C."/>
        </authorList>
    </citation>
    <scope>PROTEIN SEQUENCE OF 24-35</scope>
    <scope>TISSUE SPECIFICITY</scope>
    <scope>MASS SPECTROMETRY</scope>
    <scope>IDENTIFICATION BY MASS SPECTROMETRY</scope>
    <scope>AMIDATION AT PHE-35</scope>
</reference>
<evidence type="ECO:0000250" key="1">
    <source>
        <dbReference type="UniProtKB" id="B3EWH1"/>
    </source>
</evidence>
<evidence type="ECO:0000255" key="2"/>
<evidence type="ECO:0000269" key="3">
    <source>
    </source>
</evidence>
<evidence type="ECO:0000303" key="4">
    <source>
    </source>
</evidence>
<evidence type="ECO:0000305" key="5"/>
<evidence type="ECO:0000305" key="6">
    <source>
    </source>
</evidence>
<evidence type="ECO:0000312" key="7">
    <source>
        <dbReference type="EMBL" id="EFN63630.1"/>
    </source>
</evidence>
<comment type="subcellular location">
    <subcellularLocation>
        <location evidence="6">Secreted</location>
    </subcellularLocation>
</comment>
<comment type="tissue specificity">
    <text evidence="3">Expressed in brain, the retrocerebral complex and in ventral, thoracic and abdominal ganglia (at protein level).</text>
</comment>
<comment type="mass spectrometry"/>
<comment type="similarity">
    <text evidence="2">Belongs to the FARP (FMRFamide related peptide) family.</text>
</comment>
<comment type="sequence caution" evidence="6">
    <conflict type="erroneous gene model prediction">
        <sequence resource="EMBL-CDS" id="EFN63630"/>
    </conflict>
</comment>
<accession>E2ASG4</accession>
<protein>
    <recommendedName>
        <fullName evidence="1">SIFamide-related peptide</fullName>
        <shortName evidence="4">SIFa</shortName>
    </recommendedName>
    <alternativeName>
        <fullName evidence="5">AYKKPPFNGSIF-amide</fullName>
    </alternativeName>
</protein>
<gene>
    <name evidence="7" type="ORF">EAG_07408</name>
</gene>
<organism>
    <name type="scientific">Camponotus floridanus</name>
    <name type="common">Florida carpenter ant</name>
    <dbReference type="NCBI Taxonomy" id="104421"/>
    <lineage>
        <taxon>Eukaryota</taxon>
        <taxon>Metazoa</taxon>
        <taxon>Ecdysozoa</taxon>
        <taxon>Arthropoda</taxon>
        <taxon>Hexapoda</taxon>
        <taxon>Insecta</taxon>
        <taxon>Pterygota</taxon>
        <taxon>Neoptera</taxon>
        <taxon>Endopterygota</taxon>
        <taxon>Hymenoptera</taxon>
        <taxon>Apocrita</taxon>
        <taxon>Aculeata</taxon>
        <taxon>Formicoidea</taxon>
        <taxon>Formicidae</taxon>
        <taxon>Formicinae</taxon>
        <taxon>Camponotus</taxon>
    </lineage>
</organism>
<name>FAR_CAMFO</name>